<dbReference type="EMBL" id="CP000048">
    <property type="protein sequence ID" value="AAX16899.1"/>
    <property type="molecule type" value="Genomic_DNA"/>
</dbReference>
<dbReference type="RefSeq" id="WP_012422156.1">
    <property type="nucleotide sequence ID" value="NZ_CP073136.1"/>
</dbReference>
<dbReference type="SMR" id="B2S093"/>
<dbReference type="GeneID" id="71843196"/>
<dbReference type="KEGG" id="bhr:BH0390"/>
<dbReference type="HOGENOM" id="CLU_086499_3_0_12"/>
<dbReference type="Proteomes" id="UP000008834">
    <property type="component" value="Chromosome"/>
</dbReference>
<dbReference type="GO" id="GO:0022625">
    <property type="term" value="C:cytosolic large ribosomal subunit"/>
    <property type="evidence" value="ECO:0007669"/>
    <property type="project" value="TreeGrafter"/>
</dbReference>
<dbReference type="GO" id="GO:0003729">
    <property type="term" value="F:mRNA binding"/>
    <property type="evidence" value="ECO:0007669"/>
    <property type="project" value="TreeGrafter"/>
</dbReference>
<dbReference type="GO" id="GO:0003735">
    <property type="term" value="F:structural constituent of ribosome"/>
    <property type="evidence" value="ECO:0007669"/>
    <property type="project" value="InterPro"/>
</dbReference>
<dbReference type="GO" id="GO:0006412">
    <property type="term" value="P:translation"/>
    <property type="evidence" value="ECO:0007669"/>
    <property type="project" value="UniProtKB-UniRule"/>
</dbReference>
<dbReference type="CDD" id="cd00387">
    <property type="entry name" value="Ribosomal_L7_L12"/>
    <property type="match status" value="1"/>
</dbReference>
<dbReference type="FunFam" id="3.30.1390.10:FF:000001">
    <property type="entry name" value="50S ribosomal protein L7/L12"/>
    <property type="match status" value="1"/>
</dbReference>
<dbReference type="Gene3D" id="3.30.1390.10">
    <property type="match status" value="1"/>
</dbReference>
<dbReference type="Gene3D" id="1.20.5.710">
    <property type="entry name" value="Single helix bin"/>
    <property type="match status" value="1"/>
</dbReference>
<dbReference type="HAMAP" id="MF_00368">
    <property type="entry name" value="Ribosomal_bL12"/>
    <property type="match status" value="1"/>
</dbReference>
<dbReference type="InterPro" id="IPR000206">
    <property type="entry name" value="Ribosomal_bL12"/>
</dbReference>
<dbReference type="InterPro" id="IPR013823">
    <property type="entry name" value="Ribosomal_bL12_C"/>
</dbReference>
<dbReference type="InterPro" id="IPR014719">
    <property type="entry name" value="Ribosomal_bL12_C/ClpS-like"/>
</dbReference>
<dbReference type="InterPro" id="IPR008932">
    <property type="entry name" value="Ribosomal_bL12_oligo"/>
</dbReference>
<dbReference type="InterPro" id="IPR036235">
    <property type="entry name" value="Ribosomal_bL12_oligo_N_sf"/>
</dbReference>
<dbReference type="NCBIfam" id="TIGR00855">
    <property type="entry name" value="L12"/>
    <property type="match status" value="1"/>
</dbReference>
<dbReference type="PANTHER" id="PTHR45987">
    <property type="entry name" value="39S RIBOSOMAL PROTEIN L12"/>
    <property type="match status" value="1"/>
</dbReference>
<dbReference type="PANTHER" id="PTHR45987:SF4">
    <property type="entry name" value="LARGE RIBOSOMAL SUBUNIT PROTEIN BL12M"/>
    <property type="match status" value="1"/>
</dbReference>
<dbReference type="Pfam" id="PF00542">
    <property type="entry name" value="Ribosomal_L12"/>
    <property type="match status" value="1"/>
</dbReference>
<dbReference type="Pfam" id="PF16320">
    <property type="entry name" value="Ribosomal_L12_N"/>
    <property type="match status" value="1"/>
</dbReference>
<dbReference type="SUPFAM" id="SSF54736">
    <property type="entry name" value="ClpS-like"/>
    <property type="match status" value="1"/>
</dbReference>
<dbReference type="SUPFAM" id="SSF48300">
    <property type="entry name" value="Ribosomal protein L7/12, oligomerisation (N-terminal) domain"/>
    <property type="match status" value="1"/>
</dbReference>
<gene>
    <name evidence="1" type="primary">rplL</name>
    <name type="ordered locus">BH0390</name>
</gene>
<feature type="chain" id="PRO_1000121397" description="Large ribosomal subunit protein bL12">
    <location>
        <begin position="1"/>
        <end position="122"/>
    </location>
</feature>
<name>RL7_BORHD</name>
<accession>B2S093</accession>
<organism>
    <name type="scientific">Borrelia hermsii (strain HS1 / DAH)</name>
    <dbReference type="NCBI Taxonomy" id="314723"/>
    <lineage>
        <taxon>Bacteria</taxon>
        <taxon>Pseudomonadati</taxon>
        <taxon>Spirochaetota</taxon>
        <taxon>Spirochaetia</taxon>
        <taxon>Spirochaetales</taxon>
        <taxon>Borreliaceae</taxon>
        <taxon>Borrelia</taxon>
    </lineage>
</organism>
<protein>
    <recommendedName>
        <fullName evidence="1">Large ribosomal subunit protein bL12</fullName>
    </recommendedName>
    <alternativeName>
        <fullName evidence="2">50S ribosomal protein L7/L12</fullName>
    </alternativeName>
</protein>
<proteinExistence type="inferred from homology"/>
<sequence>MALSKEDILKWLEEAKTAEVVELITAIEEKFGVTAAAVAVAAGPGPAAGAEEQTEFDVMLVSFGDSKINVIKEVRAITGLGLGEAKALVEAVPKAVKEGVSKADAEEIKKKLEAVGAKVEIK</sequence>
<keyword id="KW-0687">Ribonucleoprotein</keyword>
<keyword id="KW-0689">Ribosomal protein</keyword>
<reference key="1">
    <citation type="submission" date="2004-12" db="EMBL/GenBank/DDBJ databases">
        <title>The genome sequence of Borrelia hermsii and Borrelia turicatae: comparative analysis of two agents of endemic N. America relapsing fever.</title>
        <authorList>
            <person name="Porcella S.F."/>
            <person name="Raffel S.J."/>
            <person name="Schrumpf M.E."/>
            <person name="Montgomery B."/>
            <person name="Smith T."/>
            <person name="Schwan T.G."/>
        </authorList>
    </citation>
    <scope>NUCLEOTIDE SEQUENCE [LARGE SCALE GENOMIC DNA]</scope>
    <source>
        <strain>HS1 / DAH</strain>
    </source>
</reference>
<evidence type="ECO:0000255" key="1">
    <source>
        <dbReference type="HAMAP-Rule" id="MF_00368"/>
    </source>
</evidence>
<evidence type="ECO:0000305" key="2"/>
<comment type="function">
    <text evidence="1">Forms part of the ribosomal stalk which helps the ribosome interact with GTP-bound translation factors. Is thus essential for accurate translation.</text>
</comment>
<comment type="subunit">
    <text evidence="1">Homodimer. Part of the ribosomal stalk of the 50S ribosomal subunit. Forms a multimeric L10(L12)X complex, where L10 forms an elongated spine to which 2 to 4 L12 dimers bind in a sequential fashion. Binds GTP-bound translation factors.</text>
</comment>
<comment type="similarity">
    <text evidence="1">Belongs to the bacterial ribosomal protein bL12 family.</text>
</comment>